<evidence type="ECO:0000255" key="1">
    <source>
        <dbReference type="HAMAP-Rule" id="MF_00120"/>
    </source>
</evidence>
<proteinExistence type="inferred from homology"/>
<name>GATA_METC4</name>
<sequence length="493" mass="52391">MTALNELTLAEARDGLKAKDFSAREIAQAHLDAIDRAKALNAYIVATPDRALKMAEVSDQKIAKGEARPLEGLPLGIKDLFATQGVHTTAGSKILEGFEPHYESNVSSQLWRDGAVMLGKLNLDEFAMGSSNETSAYGKTISPWRRQGSDAPLVPGGSSGGSAAAVAAHLCLGATATDTGGSIRQPAAFTGTVGIKPTYGRCSRWGIIAYASSLDQAGPIARTVQDCAILLGSMAGHDPRDTTSVDMPVPDFEAAISRGVKGLTIGIPKEYRVEGMPAEIQRLWDQGADWLREAGATIKEISLPHTQYALPAYYIVAPAEASSNLARYDGVRYGLRVPGKDIAGMYENTRAAGFGREVKRRIMIGTYVLSAGYYDAYYVRAQKIRTLIKRDFEAAYAAGVDAILTPATPSAAFGIGEMASADPVEMYLNDVFTVTVNMAGLPGISVPAGLDAQGLPLGLQLIGRPFDEETLFAAAQTIENAAGRISLPKAWWA</sequence>
<gene>
    <name evidence="1" type="primary">gatA</name>
    <name type="ordered locus">Mchl_3647</name>
</gene>
<accession>B7KWB0</accession>
<organism>
    <name type="scientific">Methylorubrum extorquens (strain CM4 / NCIMB 13688)</name>
    <name type="common">Methylobacterium extorquens</name>
    <dbReference type="NCBI Taxonomy" id="440085"/>
    <lineage>
        <taxon>Bacteria</taxon>
        <taxon>Pseudomonadati</taxon>
        <taxon>Pseudomonadota</taxon>
        <taxon>Alphaproteobacteria</taxon>
        <taxon>Hyphomicrobiales</taxon>
        <taxon>Methylobacteriaceae</taxon>
        <taxon>Methylorubrum</taxon>
    </lineage>
</organism>
<protein>
    <recommendedName>
        <fullName evidence="1">Glutamyl-tRNA(Gln) amidotransferase subunit A</fullName>
        <shortName evidence="1">Glu-ADT subunit A</shortName>
        <ecNumber evidence="1">6.3.5.7</ecNumber>
    </recommendedName>
</protein>
<feature type="chain" id="PRO_1000122483" description="Glutamyl-tRNA(Gln) amidotransferase subunit A">
    <location>
        <begin position="1"/>
        <end position="493"/>
    </location>
</feature>
<feature type="active site" description="Charge relay system" evidence="1">
    <location>
        <position position="78"/>
    </location>
</feature>
<feature type="active site" description="Charge relay system" evidence="1">
    <location>
        <position position="158"/>
    </location>
</feature>
<feature type="active site" description="Acyl-ester intermediate" evidence="1">
    <location>
        <position position="182"/>
    </location>
</feature>
<keyword id="KW-0067">ATP-binding</keyword>
<keyword id="KW-0436">Ligase</keyword>
<keyword id="KW-0547">Nucleotide-binding</keyword>
<keyword id="KW-0648">Protein biosynthesis</keyword>
<dbReference type="EC" id="6.3.5.7" evidence="1"/>
<dbReference type="EMBL" id="CP001298">
    <property type="protein sequence ID" value="ACK84467.1"/>
    <property type="molecule type" value="Genomic_DNA"/>
</dbReference>
<dbReference type="RefSeq" id="WP_015951706.1">
    <property type="nucleotide sequence ID" value="NC_011757.1"/>
</dbReference>
<dbReference type="SMR" id="B7KWB0"/>
<dbReference type="KEGG" id="mch:Mchl_3647"/>
<dbReference type="HOGENOM" id="CLU_009600_0_3_5"/>
<dbReference type="Proteomes" id="UP000002385">
    <property type="component" value="Chromosome"/>
</dbReference>
<dbReference type="GO" id="GO:0030956">
    <property type="term" value="C:glutamyl-tRNA(Gln) amidotransferase complex"/>
    <property type="evidence" value="ECO:0007669"/>
    <property type="project" value="InterPro"/>
</dbReference>
<dbReference type="GO" id="GO:0005524">
    <property type="term" value="F:ATP binding"/>
    <property type="evidence" value="ECO:0007669"/>
    <property type="project" value="UniProtKB-KW"/>
</dbReference>
<dbReference type="GO" id="GO:0050567">
    <property type="term" value="F:glutaminyl-tRNA synthase (glutamine-hydrolyzing) activity"/>
    <property type="evidence" value="ECO:0007669"/>
    <property type="project" value="UniProtKB-UniRule"/>
</dbReference>
<dbReference type="GO" id="GO:0006412">
    <property type="term" value="P:translation"/>
    <property type="evidence" value="ECO:0007669"/>
    <property type="project" value="UniProtKB-UniRule"/>
</dbReference>
<dbReference type="Gene3D" id="3.90.1300.10">
    <property type="entry name" value="Amidase signature (AS) domain"/>
    <property type="match status" value="1"/>
</dbReference>
<dbReference type="HAMAP" id="MF_00120">
    <property type="entry name" value="GatA"/>
    <property type="match status" value="1"/>
</dbReference>
<dbReference type="InterPro" id="IPR000120">
    <property type="entry name" value="Amidase"/>
</dbReference>
<dbReference type="InterPro" id="IPR020556">
    <property type="entry name" value="Amidase_CS"/>
</dbReference>
<dbReference type="InterPro" id="IPR023631">
    <property type="entry name" value="Amidase_dom"/>
</dbReference>
<dbReference type="InterPro" id="IPR036928">
    <property type="entry name" value="AS_sf"/>
</dbReference>
<dbReference type="InterPro" id="IPR004412">
    <property type="entry name" value="GatA"/>
</dbReference>
<dbReference type="NCBIfam" id="TIGR00132">
    <property type="entry name" value="gatA"/>
    <property type="match status" value="1"/>
</dbReference>
<dbReference type="PANTHER" id="PTHR11895:SF151">
    <property type="entry name" value="GLUTAMYL-TRNA(GLN) AMIDOTRANSFERASE SUBUNIT A"/>
    <property type="match status" value="1"/>
</dbReference>
<dbReference type="PANTHER" id="PTHR11895">
    <property type="entry name" value="TRANSAMIDASE"/>
    <property type="match status" value="1"/>
</dbReference>
<dbReference type="Pfam" id="PF01425">
    <property type="entry name" value="Amidase"/>
    <property type="match status" value="1"/>
</dbReference>
<dbReference type="SUPFAM" id="SSF75304">
    <property type="entry name" value="Amidase signature (AS) enzymes"/>
    <property type="match status" value="1"/>
</dbReference>
<dbReference type="PROSITE" id="PS00571">
    <property type="entry name" value="AMIDASES"/>
    <property type="match status" value="1"/>
</dbReference>
<reference key="1">
    <citation type="submission" date="2008-12" db="EMBL/GenBank/DDBJ databases">
        <title>Complete sequence of chromosome of Methylobacterium chloromethanicum CM4.</title>
        <authorList>
            <consortium name="US DOE Joint Genome Institute"/>
            <person name="Lucas S."/>
            <person name="Copeland A."/>
            <person name="Lapidus A."/>
            <person name="Glavina del Rio T."/>
            <person name="Dalin E."/>
            <person name="Tice H."/>
            <person name="Bruce D."/>
            <person name="Goodwin L."/>
            <person name="Pitluck S."/>
            <person name="Chertkov O."/>
            <person name="Brettin T."/>
            <person name="Detter J.C."/>
            <person name="Han C."/>
            <person name="Larimer F."/>
            <person name="Land M."/>
            <person name="Hauser L."/>
            <person name="Kyrpides N."/>
            <person name="Mikhailova N."/>
            <person name="Marx C."/>
            <person name="Richardson P."/>
        </authorList>
    </citation>
    <scope>NUCLEOTIDE SEQUENCE [LARGE SCALE GENOMIC DNA]</scope>
    <source>
        <strain>CM4 / NCIMB 13688</strain>
    </source>
</reference>
<comment type="function">
    <text evidence="1">Allows the formation of correctly charged Gln-tRNA(Gln) through the transamidation of misacylated Glu-tRNA(Gln) in organisms which lack glutaminyl-tRNA synthetase. The reaction takes place in the presence of glutamine and ATP through an activated gamma-phospho-Glu-tRNA(Gln).</text>
</comment>
<comment type="catalytic activity">
    <reaction evidence="1">
        <text>L-glutamyl-tRNA(Gln) + L-glutamine + ATP + H2O = L-glutaminyl-tRNA(Gln) + L-glutamate + ADP + phosphate + H(+)</text>
        <dbReference type="Rhea" id="RHEA:17521"/>
        <dbReference type="Rhea" id="RHEA-COMP:9681"/>
        <dbReference type="Rhea" id="RHEA-COMP:9684"/>
        <dbReference type="ChEBI" id="CHEBI:15377"/>
        <dbReference type="ChEBI" id="CHEBI:15378"/>
        <dbReference type="ChEBI" id="CHEBI:29985"/>
        <dbReference type="ChEBI" id="CHEBI:30616"/>
        <dbReference type="ChEBI" id="CHEBI:43474"/>
        <dbReference type="ChEBI" id="CHEBI:58359"/>
        <dbReference type="ChEBI" id="CHEBI:78520"/>
        <dbReference type="ChEBI" id="CHEBI:78521"/>
        <dbReference type="ChEBI" id="CHEBI:456216"/>
        <dbReference type="EC" id="6.3.5.7"/>
    </reaction>
</comment>
<comment type="subunit">
    <text evidence="1">Heterotrimer of A, B and C subunits.</text>
</comment>
<comment type="similarity">
    <text evidence="1">Belongs to the amidase family. GatA subfamily.</text>
</comment>